<keyword id="KW-0002">3D-structure</keyword>
<keyword id="KW-0007">Acetylation</keyword>
<keyword id="KW-1003">Cell membrane</keyword>
<keyword id="KW-0175">Coiled coil</keyword>
<keyword id="KW-0968">Cytoplasmic vesicle</keyword>
<keyword id="KW-0225">Disease variant</keyword>
<keyword id="KW-0991">Intellectual disability</keyword>
<keyword id="KW-0472">Membrane</keyword>
<keyword id="KW-0597">Phosphoprotein</keyword>
<keyword id="KW-1267">Proteomics identification</keyword>
<keyword id="KW-1185">Reference proteome</keyword>
<keyword id="KW-0770">Synapse</keyword>
<keyword id="KW-0812">Transmembrane</keyword>
<keyword id="KW-1133">Transmembrane helix</keyword>
<reference key="1">
    <citation type="journal article" date="1990" name="J. Biol. Chem.">
        <title>Structures and chromosomal localizations of two human genes encoding synaptobrevins 1 and 2.</title>
        <authorList>
            <person name="Archer B.T. III"/>
            <person name="Oezcelik T."/>
            <person name="Jahn R."/>
            <person name="Francke U."/>
            <person name="Suedhof T.C."/>
        </authorList>
    </citation>
    <scope>NUCLEOTIDE SEQUENCE [GENOMIC DNA]</scope>
</reference>
<reference key="2">
    <citation type="submission" date="1998-03" db="EMBL/GenBank/DDBJ databases">
        <title>Expression of VAMP genes in human neutrophils.</title>
        <authorList>
            <person name="Nabokina S.M."/>
            <person name="Lazo P.A."/>
            <person name="Mollinedo F."/>
        </authorList>
    </citation>
    <scope>NUCLEOTIDE SEQUENCE [MRNA]</scope>
    <source>
        <tissue>Peripheral blood</tissue>
    </source>
</reference>
<reference key="3">
    <citation type="submission" date="1999-03" db="EMBL/GenBank/DDBJ databases">
        <title>Genomic structure of human SYB2 gene.</title>
        <authorList>
            <person name="Taruscio D."/>
            <person name="Zoraqi K.G."/>
            <person name="Falbo V."/>
        </authorList>
    </citation>
    <scope>NUCLEOTIDE SEQUENCE [GENOMIC DNA]</scope>
    <source>
        <tissue>Blood</tissue>
    </source>
</reference>
<reference key="4">
    <citation type="journal article" date="2004" name="Nat. Genet.">
        <title>Complete sequencing and characterization of 21,243 full-length human cDNAs.</title>
        <authorList>
            <person name="Ota T."/>
            <person name="Suzuki Y."/>
            <person name="Nishikawa T."/>
            <person name="Otsuki T."/>
            <person name="Sugiyama T."/>
            <person name="Irie R."/>
            <person name="Wakamatsu A."/>
            <person name="Hayashi K."/>
            <person name="Sato H."/>
            <person name="Nagai K."/>
            <person name="Kimura K."/>
            <person name="Makita H."/>
            <person name="Sekine M."/>
            <person name="Obayashi M."/>
            <person name="Nishi T."/>
            <person name="Shibahara T."/>
            <person name="Tanaka T."/>
            <person name="Ishii S."/>
            <person name="Yamamoto J."/>
            <person name="Saito K."/>
            <person name="Kawai Y."/>
            <person name="Isono Y."/>
            <person name="Nakamura Y."/>
            <person name="Nagahari K."/>
            <person name="Murakami K."/>
            <person name="Yasuda T."/>
            <person name="Iwayanagi T."/>
            <person name="Wagatsuma M."/>
            <person name="Shiratori A."/>
            <person name="Sudo H."/>
            <person name="Hosoiri T."/>
            <person name="Kaku Y."/>
            <person name="Kodaira H."/>
            <person name="Kondo H."/>
            <person name="Sugawara M."/>
            <person name="Takahashi M."/>
            <person name="Kanda K."/>
            <person name="Yokoi T."/>
            <person name="Furuya T."/>
            <person name="Kikkawa E."/>
            <person name="Omura Y."/>
            <person name="Abe K."/>
            <person name="Kamihara K."/>
            <person name="Katsuta N."/>
            <person name="Sato K."/>
            <person name="Tanikawa M."/>
            <person name="Yamazaki M."/>
            <person name="Ninomiya K."/>
            <person name="Ishibashi T."/>
            <person name="Yamashita H."/>
            <person name="Murakawa K."/>
            <person name="Fujimori K."/>
            <person name="Tanai H."/>
            <person name="Kimata M."/>
            <person name="Watanabe M."/>
            <person name="Hiraoka S."/>
            <person name="Chiba Y."/>
            <person name="Ishida S."/>
            <person name="Ono Y."/>
            <person name="Takiguchi S."/>
            <person name="Watanabe S."/>
            <person name="Yosida M."/>
            <person name="Hotuta T."/>
            <person name="Kusano J."/>
            <person name="Kanehori K."/>
            <person name="Takahashi-Fujii A."/>
            <person name="Hara H."/>
            <person name="Tanase T.-O."/>
            <person name="Nomura Y."/>
            <person name="Togiya S."/>
            <person name="Komai F."/>
            <person name="Hara R."/>
            <person name="Takeuchi K."/>
            <person name="Arita M."/>
            <person name="Imose N."/>
            <person name="Musashino K."/>
            <person name="Yuuki H."/>
            <person name="Oshima A."/>
            <person name="Sasaki N."/>
            <person name="Aotsuka S."/>
            <person name="Yoshikawa Y."/>
            <person name="Matsunawa H."/>
            <person name="Ichihara T."/>
            <person name="Shiohata N."/>
            <person name="Sano S."/>
            <person name="Moriya S."/>
            <person name="Momiyama H."/>
            <person name="Satoh N."/>
            <person name="Takami S."/>
            <person name="Terashima Y."/>
            <person name="Suzuki O."/>
            <person name="Nakagawa S."/>
            <person name="Senoh A."/>
            <person name="Mizoguchi H."/>
            <person name="Goto Y."/>
            <person name="Shimizu F."/>
            <person name="Wakebe H."/>
            <person name="Hishigaki H."/>
            <person name="Watanabe T."/>
            <person name="Sugiyama A."/>
            <person name="Takemoto M."/>
            <person name="Kawakami B."/>
            <person name="Yamazaki M."/>
            <person name="Watanabe K."/>
            <person name="Kumagai A."/>
            <person name="Itakura S."/>
            <person name="Fukuzumi Y."/>
            <person name="Fujimori Y."/>
            <person name="Komiyama M."/>
            <person name="Tashiro H."/>
            <person name="Tanigami A."/>
            <person name="Fujiwara T."/>
            <person name="Ono T."/>
            <person name="Yamada K."/>
            <person name="Fujii Y."/>
            <person name="Ozaki K."/>
            <person name="Hirao M."/>
            <person name="Ohmori Y."/>
            <person name="Kawabata A."/>
            <person name="Hikiji T."/>
            <person name="Kobatake N."/>
            <person name="Inagaki H."/>
            <person name="Ikema Y."/>
            <person name="Okamoto S."/>
            <person name="Okitani R."/>
            <person name="Kawakami T."/>
            <person name="Noguchi S."/>
            <person name="Itoh T."/>
            <person name="Shigeta K."/>
            <person name="Senba T."/>
            <person name="Matsumura K."/>
            <person name="Nakajima Y."/>
            <person name="Mizuno T."/>
            <person name="Morinaga M."/>
            <person name="Sasaki M."/>
            <person name="Togashi T."/>
            <person name="Oyama M."/>
            <person name="Hata H."/>
            <person name="Watanabe M."/>
            <person name="Komatsu T."/>
            <person name="Mizushima-Sugano J."/>
            <person name="Satoh T."/>
            <person name="Shirai Y."/>
            <person name="Takahashi Y."/>
            <person name="Nakagawa K."/>
            <person name="Okumura K."/>
            <person name="Nagase T."/>
            <person name="Nomura N."/>
            <person name="Kikuchi H."/>
            <person name="Masuho Y."/>
            <person name="Yamashita R."/>
            <person name="Nakai K."/>
            <person name="Yada T."/>
            <person name="Nakamura Y."/>
            <person name="Ohara O."/>
            <person name="Isogai T."/>
            <person name="Sugano S."/>
        </authorList>
    </citation>
    <scope>NUCLEOTIDE SEQUENCE [LARGE SCALE MRNA]</scope>
    <source>
        <tissue>Cerebellum</tissue>
    </source>
</reference>
<reference key="5">
    <citation type="submission" date="2005-09" db="EMBL/GenBank/DDBJ databases">
        <authorList>
            <person name="Mural R.J."/>
            <person name="Istrail S."/>
            <person name="Sutton G.G."/>
            <person name="Florea L."/>
            <person name="Halpern A.L."/>
            <person name="Mobarry C.M."/>
            <person name="Lippert R."/>
            <person name="Walenz B."/>
            <person name="Shatkay H."/>
            <person name="Dew I."/>
            <person name="Miller J.R."/>
            <person name="Flanigan M.J."/>
            <person name="Edwards N.J."/>
            <person name="Bolanos R."/>
            <person name="Fasulo D."/>
            <person name="Halldorsson B.V."/>
            <person name="Hannenhalli S."/>
            <person name="Turner R."/>
            <person name="Yooseph S."/>
            <person name="Lu F."/>
            <person name="Nusskern D.R."/>
            <person name="Shue B.C."/>
            <person name="Zheng X.H."/>
            <person name="Zhong F."/>
            <person name="Delcher A.L."/>
            <person name="Huson D.H."/>
            <person name="Kravitz S.A."/>
            <person name="Mouchard L."/>
            <person name="Reinert K."/>
            <person name="Remington K.A."/>
            <person name="Clark A.G."/>
            <person name="Waterman M.S."/>
            <person name="Eichler E.E."/>
            <person name="Adams M.D."/>
            <person name="Hunkapiller M.W."/>
            <person name="Myers E.W."/>
            <person name="Venter J.C."/>
        </authorList>
    </citation>
    <scope>NUCLEOTIDE SEQUENCE [LARGE SCALE GENOMIC DNA]</scope>
</reference>
<reference key="6">
    <citation type="journal article" date="2004" name="Genome Res.">
        <title>The status, quality, and expansion of the NIH full-length cDNA project: the Mammalian Gene Collection (MGC).</title>
        <authorList>
            <consortium name="The MGC Project Team"/>
        </authorList>
    </citation>
    <scope>NUCLEOTIDE SEQUENCE [LARGE SCALE MRNA]</scope>
    <source>
        <tissue>Neuroblastoma</tissue>
        <tissue>Testis</tissue>
    </source>
</reference>
<reference key="7">
    <citation type="journal article" date="1996" name="Biochem. J.">
        <title>Insulin-responsive tissues contain the core complex protein SNAP-25 (synaptosomal-associated protein 25) A and B isoforms in addition to syntaxin 4 and synaptobrevins 1 and 2.</title>
        <authorList>
            <person name="Jagadish M.N."/>
            <person name="Fernandez C.S."/>
            <person name="Hewish D.R."/>
            <person name="Macaulay S.L."/>
            <person name="Gough K.H."/>
            <person name="Grusovin J."/>
            <person name="Verkuylen A."/>
            <person name="Cosgrove L."/>
            <person name="Alafaci A."/>
            <person name="Frenkel M.J."/>
            <person name="Ward C.W."/>
        </authorList>
    </citation>
    <scope>TISSUE SPECIFICITY</scope>
</reference>
<reference key="8">
    <citation type="journal article" date="1994" name="Biochemistry">
        <title>Differences in the protease activities of tetanus and botulinum B toxins revealed by the cleavage of vesicle-associated membrane protein and various sized fragments.</title>
        <authorList>
            <person name="Foran P."/>
            <person name="Shone C.C."/>
            <person name="Dolly J.O."/>
        </authorList>
    </citation>
    <scope>PROTEOLYTIC CLEAVAGE (MICROBIAL INFECTION) BY C.BOTULINUM NEUROTOXIN TYPE B AND BY C.TETANI TETANUS TOXIN</scope>
</reference>
<reference key="9">
    <citation type="journal article" date="1995" name="EMBO J.">
        <title>Transport route for synaptobrevin via a novel pathway of insertion into the endoplasmic reticulum membrane.</title>
        <authorList>
            <person name="Kutay U."/>
            <person name="Ahnert-Hilger G."/>
            <person name="Hartmann E."/>
            <person name="Wiedenmann B."/>
            <person name="Rapoport T.A."/>
        </authorList>
    </citation>
    <scope>TOPOLOGY</scope>
</reference>
<reference key="10">
    <citation type="journal article" date="2007" name="FEBS J.">
        <title>WD-repeat-propeller-FYVE protein, ProF, binds VAMP2 and protein kinase Czeta.</title>
        <authorList>
            <person name="Fritzius T."/>
            <person name="Frey A.D."/>
            <person name="Schweneker M."/>
            <person name="Mayer D."/>
            <person name="Moelling K."/>
        </authorList>
    </citation>
    <scope>INTERACTION WITH WDFY2; PRKCZ AND PRKCI</scope>
    <scope>COMPLEX FORMATION WITH WDFY2 AND PRKCZ</scope>
    <scope>SUBCELLULAR LOCATION</scope>
    <scope>PHOSPHORYLATION</scope>
    <scope>MUTAGENESIS OF SER-28; SER-61; SER-75 AND SER-80</scope>
</reference>
<reference key="11">
    <citation type="journal article" date="2000" name="Nat. Struct. Biol.">
        <title>Cocrystal structure of synaptobrevin-II bound to botulinum neurotoxin type B at 2.0 A resolution.</title>
        <authorList>
            <person name="Hanson M.A."/>
            <person name="Stevens R.C."/>
        </authorList>
    </citation>
    <scope>RETRACTED PAPER</scope>
</reference>
<reference key="12">
    <citation type="journal article" date="2009" name="Nat. Struct. Mol. Biol.">
        <title>Retraction: Cocrystal structure of synaptobrevin-II bound to botulinum neurotoxin type B at 2.0 A resolution.</title>
        <authorList>
            <person name="Hanson M.A."/>
            <person name="Stevens R.C."/>
        </authorList>
    </citation>
    <scope>RETRACTION NOTICE OF PUBMED:10932255</scope>
</reference>
<reference key="13">
    <citation type="journal article" date="2010" name="Science">
        <title>Alpha-synuclein promotes SNARE-complex assembly in vivo and in vitro.</title>
        <authorList>
            <person name="Burre J."/>
            <person name="Sharma M."/>
            <person name="Tsetsenis T."/>
            <person name="Buchman V."/>
            <person name="Etherton M.R."/>
            <person name="Suedhof T.C."/>
        </authorList>
    </citation>
    <scope>INTERACTION WITH ALPHA-SYNUCLEIN/SNCA</scope>
</reference>
<reference key="14">
    <citation type="journal article" date="2011" name="Cell">
        <title>The molecular basis for the endocytosis of small R-SNAREs by the clathrin adaptor CALM.</title>
        <authorList>
            <person name="Miller S.E."/>
            <person name="Sahlender D.A."/>
            <person name="Graham S.C."/>
            <person name="Honing S."/>
            <person name="Robinson M.S."/>
            <person name="Peden A.A."/>
            <person name="Owen D.J."/>
        </authorList>
    </citation>
    <scope>INTERACTION WITH PICALM</scope>
</reference>
<reference key="15">
    <citation type="journal article" date="2011" name="Proc. Natl. Acad. Sci. U.S.A.">
        <title>SNARE motif-mediated sorting of synaptobrevin by the endocytic adaptors clathrin assembly lymphoid myeloid leukemia (CALM) and AP180 at synapses.</title>
        <authorList>
            <person name="Koo S.J."/>
            <person name="Markovic S."/>
            <person name="Puchkov D."/>
            <person name="Mahrenholz C.C."/>
            <person name="Beceren-Braun F."/>
            <person name="Maritzen T."/>
            <person name="Dernedde J."/>
            <person name="Volkmer R."/>
            <person name="Oschkinat H."/>
            <person name="Haucke V."/>
        </authorList>
    </citation>
    <scope>INTERACTION WITH PICALM</scope>
</reference>
<reference key="16">
    <citation type="journal article" date="2012" name="Microbiol. Immunol.">
        <title>Specificity of botulinum protease for human VAMP family proteins.</title>
        <authorList>
            <person name="Yamamoto H."/>
            <person name="Ida T."/>
            <person name="Tsutsuki H."/>
            <person name="Mori M."/>
            <person name="Matsumoto T."/>
            <person name="Kohda T."/>
            <person name="Mukamoto M."/>
            <person name="Goshima N."/>
            <person name="Kozaki S."/>
            <person name="Ihara H."/>
        </authorList>
    </citation>
    <scope>PROTEOLYTIC CLEAVAGE (MICROBIAL INFECTION) BY C.BOTULINUM NEUROTOXIN TYPES B; D AND F</scope>
</reference>
<reference evidence="22 23" key="17">
    <citation type="journal article" date="2009" name="Nat. Struct. Mol. Biol.">
        <title>Mode of VAMP substrate recognition and inhibition of Clostridium botulinum neurotoxin F.</title>
        <authorList>
            <person name="Agarwal R."/>
            <person name="Schmidt J.J."/>
            <person name="Stafford R.G."/>
            <person name="Swaminathan S."/>
        </authorList>
    </citation>
    <scope>X-RAY CRYSTALLOGRAPHY (2.10 ANGSTROMS) OF 25-57 IN COMPLEX WITH C.BOTULINUM NEUROTOXIN F LIGHT CHAIN</scope>
    <scope>PROTEOLYTIC CLEAVAGE (MICROBIAL INFECTION) BY C.BOTULINUM NEUROTOXIN TYPE X</scope>
    <scope>MUTAGENESIS OF GLU-41; VAL-50; VAL-53 AND 53-VAL-LEU-54</scope>
</reference>
<reference key="18">
    <citation type="journal article" date="2019" name="Am. J. Hum. Genet.">
        <title>Mutations in the Neuronal Vesicular SNARE VAMP2 Affect Synaptic Membrane Fusion and Impair Human Neurodevelopment.</title>
        <authorList>
            <consortium name="Deciphering Developmental Disorders Study"/>
            <consortium name="SYNAPS Study Group"/>
            <person name="Salpietro V."/>
            <person name="Malintan N.T."/>
            <person name="Llano-Rivas I."/>
            <person name="Spaeth C.G."/>
            <person name="Efthymiou S."/>
            <person name="Striano P."/>
            <person name="Vandrovcova J."/>
            <person name="Cutrupi M.C."/>
            <person name="Chimenz R."/>
            <person name="David E."/>
            <person name="Di Rosa G."/>
            <person name="Marce-Grau A."/>
            <person name="Raspall-Chaure M."/>
            <person name="Martin-Hernandez E."/>
            <person name="Zara F."/>
            <person name="Minetti C."/>
            <person name="Bello O.D."/>
            <person name="De Zorzi R."/>
            <person name="Fortuna S."/>
            <person name="Dauber A."/>
            <person name="Alkhawaja M."/>
            <person name="Sultan T."/>
            <person name="Mankad K."/>
            <person name="Vitobello A."/>
            <person name="Thomas Q."/>
            <person name="Mau-Them F.T."/>
            <person name="Faivre L."/>
            <person name="Martinez-Azorin F."/>
            <person name="Prada C.E."/>
            <person name="Macaya A."/>
            <person name="Kullmann D.M."/>
            <person name="Rothman J.E."/>
            <person name="Krishnakumar S.S."/>
            <person name="Houlden H."/>
        </authorList>
    </citation>
    <scope>VARIANTS NEDHAHM VAL-43 DEL; ILE-45 DEL; PRO-75; SER-77 AND ALA-78</scope>
    <scope>CHARACTERIZATION OF VARIANTS NEDHAHM PRO-75 AND ALA-78</scope>
    <scope>FUNCTION</scope>
</reference>
<gene>
    <name evidence="21" type="primary">VAMP2</name>
    <name type="synonym">SYB2</name>
</gene>
<organism>
    <name type="scientific">Homo sapiens</name>
    <name type="common">Human</name>
    <dbReference type="NCBI Taxonomy" id="9606"/>
    <lineage>
        <taxon>Eukaryota</taxon>
        <taxon>Metazoa</taxon>
        <taxon>Chordata</taxon>
        <taxon>Craniata</taxon>
        <taxon>Vertebrata</taxon>
        <taxon>Euteleostomi</taxon>
        <taxon>Mammalia</taxon>
        <taxon>Eutheria</taxon>
        <taxon>Euarchontoglires</taxon>
        <taxon>Primates</taxon>
        <taxon>Haplorrhini</taxon>
        <taxon>Catarrhini</taxon>
        <taxon>Hominidae</taxon>
        <taxon>Homo</taxon>
    </lineage>
</organism>
<accession>P63027</accession>
<accession>P19065</accession>
<accession>Q9BUC2</accession>
<evidence type="ECO:0000250" key="1">
    <source>
        <dbReference type="UniProtKB" id="P63026"/>
    </source>
</evidence>
<evidence type="ECO:0000250" key="2">
    <source>
        <dbReference type="UniProtKB" id="P63044"/>
    </source>
</evidence>
<evidence type="ECO:0000250" key="3">
    <source>
        <dbReference type="UniProtKB" id="P63045"/>
    </source>
</evidence>
<evidence type="ECO:0000255" key="4"/>
<evidence type="ECO:0000255" key="5">
    <source>
        <dbReference type="PROSITE-ProRule" id="PRU00290"/>
    </source>
</evidence>
<evidence type="ECO:0000256" key="6">
    <source>
        <dbReference type="SAM" id="MobiDB-lite"/>
    </source>
</evidence>
<evidence type="ECO:0000269" key="7">
    <source>
    </source>
</evidence>
<evidence type="ECO:0000269" key="8">
    <source>
    </source>
</evidence>
<evidence type="ECO:0000269" key="9">
    <source>
    </source>
</evidence>
<evidence type="ECO:0000269" key="10">
    <source>
    </source>
</evidence>
<evidence type="ECO:0000269" key="11">
    <source>
    </source>
</evidence>
<evidence type="ECO:0000269" key="12">
    <source>
    </source>
</evidence>
<evidence type="ECO:0000269" key="13">
    <source>
    </source>
</evidence>
<evidence type="ECO:0000269" key="14">
    <source>
    </source>
</evidence>
<evidence type="ECO:0000269" key="15">
    <source>
    </source>
</evidence>
<evidence type="ECO:0000269" key="16">
    <source>
    </source>
</evidence>
<evidence type="ECO:0000269" key="17">
    <source>
    </source>
</evidence>
<evidence type="ECO:0000305" key="18"/>
<evidence type="ECO:0000305" key="19">
    <source>
    </source>
</evidence>
<evidence type="ECO:0000305" key="20">
    <source>
    </source>
</evidence>
<evidence type="ECO:0000312" key="21">
    <source>
        <dbReference type="HGNC" id="HGNC:12643"/>
    </source>
</evidence>
<evidence type="ECO:0007744" key="22">
    <source>
        <dbReference type="PDB" id="3FIE"/>
    </source>
</evidence>
<evidence type="ECO:0007744" key="23">
    <source>
        <dbReference type="PDB" id="3FII"/>
    </source>
</evidence>
<evidence type="ECO:0007829" key="24">
    <source>
        <dbReference type="PDB" id="3FIE"/>
    </source>
</evidence>
<name>VAMP2_HUMAN</name>
<sequence length="116" mass="12663">MSATAATAPPAAPAGEGGPPAPPPNLTSNRRLQQTQAQVDEVVDIMRVNVDKVLERDQKLSELDDRADALQAGASQFETSAAKLKRKYWWKNLKMMIILGVICAIILIIIIVYFST</sequence>
<comment type="function">
    <text evidence="2 3 15">Involved in the targeting and/or fusion of transport vesicles to their target membrane (By similarity). Major SNARE protein of synaptic vesicles which mediates fusion of synaptic vesicles to release neurotransmitters. Essential for fast vesicular exocytosis and activity-dependent neurotransmitter release as well as fast endocytosis that mediates rapid reuse of synaptic vesicles (By similarity) (PubMed:30929742). Modulates the gating characteristics of the delayed rectifier voltage-dependent potassium channel KCNB1.</text>
</comment>
<comment type="subunit">
    <text evidence="2 3 8 11 12 13">Part of the SNARE core complex containing SNAP25, VAMP2 and STX1A; this complex constitutes the basic catalytic machinery of the complex neurotransmitter release apparatus (By similarity). Recruited to the SNARE complex following binding of the SNARE complex component STX1A to STXBP1 (By similarity). This complex binds to CPLX1. Interacts with POPDC1 and STX4 (By similarity). Interacts with VAPA and VAPB. Interacts with WDFY2, PRKCZ and PRKCI (PubMed:17313651). Forms a complex with WDFY2 and PRKCZ (PubMed:17313651). Interacts (via N-terminus) with KCNB1 (via N-terminus and C-terminus); stimulates the channel inactivation rate of KCNB1 (By similarity). Interacts with SEPT8; the interaction inhibits interaction of VAMP2 with SYP. Interacts with SYP; the interaction is inhibited by interaction with SEPT8 (By similarity). Interacts with PICALM (PubMed:21808019, PubMed:22118466). Interacts with alpha-synuclein/SNCA (PubMed:20798282). Interacts with STX3 (By similarity).</text>
</comment>
<comment type="interaction">
    <interactant intactId="EBI-520113">
        <id>P63027</id>
    </interactant>
    <interactant intactId="EBI-13059134">
        <id>Q13520</id>
        <label>AQP6</label>
    </interactant>
    <organismsDiffer>false</organismsDiffer>
    <experiments>3</experiments>
</comment>
<comment type="interaction">
    <interactant intactId="EBI-520113">
        <id>P63027</id>
    </interactant>
    <interactant intactId="EBI-11343438">
        <id>Q3SXY8</id>
        <label>ARL13B</label>
    </interactant>
    <organismsDiffer>false</organismsDiffer>
    <experiments>3</experiments>
</comment>
<comment type="interaction">
    <interactant intactId="EBI-520113">
        <id>P63027</id>
    </interactant>
    <interactant intactId="EBI-2622997">
        <id>Q9HA82</id>
        <label>CERS4</label>
    </interactant>
    <organismsDiffer>false</organismsDiffer>
    <experiments>3</experiments>
</comment>
<comment type="interaction">
    <interactant intactId="EBI-520113">
        <id>P63027</id>
    </interactant>
    <interactant intactId="EBI-6942903">
        <id>Q96BA8</id>
        <label>CREB3L1</label>
    </interactant>
    <organismsDiffer>false</organismsDiffer>
    <experiments>3</experiments>
</comment>
<comment type="interaction">
    <interactant intactId="EBI-520113">
        <id>P63027</id>
    </interactant>
    <interactant intactId="EBI-3915253">
        <id>Q15125</id>
        <label>EBP</label>
    </interactant>
    <organismsDiffer>false</organismsDiffer>
    <experiments>3</experiments>
</comment>
<comment type="interaction">
    <interactant intactId="EBI-520113">
        <id>P63027</id>
    </interactant>
    <interactant intactId="EBI-781551">
        <id>Q9Y282</id>
        <label>ERGIC3</label>
    </interactant>
    <organismsDiffer>false</organismsDiffer>
    <experiments>3</experiments>
</comment>
<comment type="interaction">
    <interactant intactId="EBI-520113">
        <id>P63027</id>
    </interactant>
    <interactant intactId="EBI-11427100">
        <id>P31937</id>
        <label>HIBADH</label>
    </interactant>
    <organismsDiffer>false</organismsDiffer>
    <experiments>3</experiments>
</comment>
<comment type="interaction">
    <interactant intactId="EBI-520113">
        <id>P63027</id>
    </interactant>
    <interactant intactId="EBI-18053395">
        <id>Q7Z5P4</id>
        <label>HSD17B13</label>
    </interactant>
    <organismsDiffer>false</organismsDiffer>
    <experiments>3</experiments>
</comment>
<comment type="interaction">
    <interactant intactId="EBI-520113">
        <id>P63027</id>
    </interactant>
    <interactant intactId="EBI-10266796">
        <id>Q8N5M9</id>
        <label>JAGN1</label>
    </interactant>
    <organismsDiffer>false</organismsDiffer>
    <experiments>3</experiments>
</comment>
<comment type="interaction">
    <interactant intactId="EBI-520113">
        <id>P63027</id>
    </interactant>
    <interactant intactId="EBI-749265">
        <id>Q8N6L0</id>
        <label>KASH5</label>
    </interactant>
    <organismsDiffer>false</organismsDiffer>
    <experiments>3</experiments>
</comment>
<comment type="interaction">
    <interactant intactId="EBI-520113">
        <id>P63027</id>
    </interactant>
    <interactant intactId="EBI-14061946">
        <id>Q5T0T0</id>
        <label>MARCHF8</label>
    </interactant>
    <organismsDiffer>false</organismsDiffer>
    <experiments>3</experiments>
</comment>
<comment type="interaction">
    <interactant intactId="EBI-520113">
        <id>P63027</id>
    </interactant>
    <interactant intactId="EBI-1255366">
        <id>O94806</id>
        <label>PRKD3</label>
    </interactant>
    <organismsDiffer>false</organismsDiffer>
    <experiments>7</experiments>
</comment>
<comment type="interaction">
    <interactant intactId="EBI-520113">
        <id>P63027</id>
    </interactant>
    <interactant intactId="EBI-17247926">
        <id>Q9NY72</id>
        <label>SCN3B</label>
    </interactant>
    <organismsDiffer>false</organismsDiffer>
    <experiments>3</experiments>
</comment>
<comment type="interaction">
    <interactant intactId="EBI-520113">
        <id>P63027</id>
    </interactant>
    <interactant intactId="EBI-10262251">
        <id>Q8IWU4</id>
        <label>SLC30A8</label>
    </interactant>
    <organismsDiffer>false</organismsDiffer>
    <experiments>3</experiments>
</comment>
<comment type="interaction">
    <interactant intactId="EBI-520113">
        <id>P63027</id>
    </interactant>
    <interactant intactId="EBI-5235586">
        <id>Q8TBB6</id>
        <label>SLC7A14</label>
    </interactant>
    <organismsDiffer>false</organismsDiffer>
    <experiments>3</experiments>
</comment>
<comment type="interaction">
    <interactant intactId="EBI-520113">
        <id>P63027</id>
    </interactant>
    <interactant intactId="EBI-490676">
        <id>O95721</id>
        <label>SNAP29</label>
    </interactant>
    <organismsDiffer>false</organismsDiffer>
    <experiments>4</experiments>
</comment>
<comment type="interaction">
    <interactant intactId="EBI-520113">
        <id>P63027</id>
    </interactant>
    <interactant intactId="EBI-985879">
        <id>P37840</id>
        <label>SNCA</label>
    </interactant>
    <organismsDiffer>false</organismsDiffer>
    <experiments>5</experiments>
</comment>
<comment type="interaction">
    <interactant intactId="EBI-520113">
        <id>P63027</id>
    </interactant>
    <interactant intactId="EBI-712466">
        <id>Q16623</id>
        <label>STX1A</label>
    </interactant>
    <organismsDiffer>false</organismsDiffer>
    <experiments>5</experiments>
</comment>
<comment type="interaction">
    <interactant intactId="EBI-520113">
        <id>P63027</id>
    </interactant>
    <interactant intactId="EBI-9071709">
        <id>P61266</id>
        <label>STX1B</label>
    </interactant>
    <organismsDiffer>false</organismsDiffer>
    <experiments>4</experiments>
</comment>
<comment type="interaction">
    <interactant intactId="EBI-520113">
        <id>P63027</id>
    </interactant>
    <interactant intactId="EBI-11956649">
        <id>P32856-2</id>
        <label>STX2</label>
    </interactant>
    <organismsDiffer>false</organismsDiffer>
    <experiments>3</experiments>
</comment>
<comment type="interaction">
    <interactant intactId="EBI-520113">
        <id>P63027</id>
    </interactant>
    <interactant intactId="EBI-744942">
        <id>Q12846</id>
        <label>STX4</label>
    </interactant>
    <organismsDiffer>false</organismsDiffer>
    <experiments>6</experiments>
</comment>
<comment type="interaction">
    <interactant intactId="EBI-520113">
        <id>P63027</id>
    </interactant>
    <interactant intactId="EBI-3922699">
        <id>Q96IK0</id>
        <label>TMEM101</label>
    </interactant>
    <organismsDiffer>false</organismsDiffer>
    <experiments>3</experiments>
</comment>
<comment type="interaction">
    <interactant intactId="EBI-520113">
        <id>P63027</id>
    </interactant>
    <interactant intactId="EBI-2548832">
        <id>Q8N661</id>
        <label>TMEM86B</label>
    </interactant>
    <organismsDiffer>false</organismsDiffer>
    <experiments>3</experiments>
</comment>
<comment type="interaction">
    <interactant intactId="EBI-520113">
        <id>P63027</id>
    </interactant>
    <interactant intactId="EBI-355164">
        <id>P55072</id>
        <label>VCP</label>
    </interactant>
    <organismsDiffer>false</organismsDiffer>
    <experiments>3</experiments>
</comment>
<comment type="interaction">
    <interactant intactId="EBI-520113">
        <id>P63027</id>
    </interactant>
    <interactant intactId="EBI-1055364">
        <id>Q3ZAQ7</id>
        <label>VMA21</label>
    </interactant>
    <organismsDiffer>false</organismsDiffer>
    <experiments>3</experiments>
</comment>
<comment type="interaction">
    <interactant intactId="EBI-520113">
        <id>P63027</id>
    </interactant>
    <interactant intactId="EBI-7604673">
        <id>A7GBG3</id>
        <label>F</label>
    </interactant>
    <organismsDiffer>true</organismsDiffer>
    <experiments>2</experiments>
</comment>
<comment type="interaction">
    <interactant intactId="EBI-520113">
        <id>P63027</id>
    </interactant>
    <interactant intactId="EBI-15790260">
        <id>Q57236</id>
        <label>F</label>
    </interactant>
    <organismsDiffer>true</organismsDiffer>
    <experiments>3</experiments>
</comment>
<comment type="interaction">
    <interactant intactId="EBI-520113">
        <id>P63027</id>
    </interactant>
    <interactant intactId="EBI-915601">
        <id>O55012</id>
        <label>Picalm</label>
    </interactant>
    <organismsDiffer>true</organismsDiffer>
    <experiments>2</experiments>
</comment>
<comment type="interaction">
    <interactant intactId="EBI-520113">
        <id>P63027</id>
    </interactant>
    <interactant intactId="EBI-7604762">
        <id>D2KHQ9</id>
    </interactant>
    <organismsDiffer>true</organismsDiffer>
    <experiments>2</experiments>
</comment>
<comment type="subcellular location">
    <subcellularLocation>
        <location evidence="8">Cytoplasmic vesicle</location>
        <location evidence="8">Secretory vesicle</location>
        <location evidence="8">Synaptic vesicle membrane</location>
        <topology evidence="4">Single-pass type IV membrane protein</topology>
    </subcellularLocation>
    <subcellularLocation>
        <location evidence="3">Cell membrane</location>
    </subcellularLocation>
    <text evidence="8">Colocalizes with PRKCZ and WDFY2 in intracellular vesicles (PubMed:17313651).</text>
</comment>
<comment type="tissue specificity">
    <text evidence="17">Nervous system and skeletal muscle.</text>
</comment>
<comment type="PTM">
    <text evidence="8">Phosphorylated by PRKCZ in vitro and this phosphorylation is increased in the presence of WDFY2.</text>
</comment>
<comment type="PTM">
    <text evidence="16 20">(Microbial infection) Targeted and hydrolyzed by C.botulinum neurotoxin type B (BoNT/B, botB) which hydrolyzes the 76-Gln-|-Phe-77 bond and probably inhibits neurotransmitter release (PubMed:7803399).</text>
</comment>
<comment type="PTM">
    <text evidence="14 18 20">(Microbial infection) Targeted and hydrolyzed by C.botulinum neurotoxin type D (BoNT/D, botD) which probably hydrolyzes the 59-Lys-|-Leu-60 bond and inhibits neurotransmitter release (PubMed:22289120). Note that humans are not known to be infected by C.botulinum type D.</text>
</comment>
<comment type="PTM">
    <text evidence="19 20">(Microbial infection) Targeted and hydrolyzed by C.botulinum neurotoxin type F (BoNT/F, botF) which hydrolyzes the 58-Gln-|-Lys-59 bond and probably inhibits neurotransmitter release (PubMed:19543288).</text>
</comment>
<comment type="PTM">
    <text evidence="16">(Microbial infection) Targeted and hydrolyzed by C.tetani tetanus toxin (tetX) which hydrolyzes the 76-Gln-|-Phe-77 bond and probably inhibits neurotransmitter release (PubMed:7803399).</text>
</comment>
<comment type="disease" evidence="15">
    <disease id="DI-05751">
        <name>Neurodevelopmental disorder with hypotonia and autistic features with or without hyperkinetic movements</name>
        <acronym>NEDHAHM</acronym>
        <description>An autosomal dominant disorder characterized by axial hypotonia apparent at birth, global developmental delay, intellectual disability, seizures, and autistic features. Involuntary hyperkinetic movements are present in some patients.</description>
        <dbReference type="MIM" id="618760"/>
    </disease>
    <text>The disease is caused by variants affecting the gene represented in this entry.</text>
</comment>
<comment type="similarity">
    <text evidence="18">Belongs to the synaptobrevin family.</text>
</comment>
<comment type="caution">
    <text evidence="7 10 16 20">A structure of a fragment of this protein in complex with the catalytic domain of C.botulinum neurotoxin type B (BoNT/B, botB) was reported; because of the lack of clear and continuous electron density for the VAMP2 peptide in the complex structure, the paper was retracted (PubMed:10932255, PubMed:19578378). However this protein is a substrate for BoNT/B (PubMed:22289120, PubMed:7803399).</text>
</comment>
<feature type="initiator methionine" description="Removed" evidence="1">
    <location>
        <position position="1"/>
    </location>
</feature>
<feature type="chain" id="PRO_0000206723" description="Vesicle-associated membrane protein 2">
    <location>
        <begin position="2"/>
        <end position="116"/>
    </location>
</feature>
<feature type="topological domain" description="Cytoplasmic" evidence="4">
    <location>
        <begin position="2"/>
        <end position="94"/>
    </location>
</feature>
<feature type="transmembrane region" description="Helical; Anchor for type IV membrane protein" evidence="4">
    <location>
        <begin position="95"/>
        <end position="114"/>
    </location>
</feature>
<feature type="topological domain" description="Vesicular" evidence="4">
    <location>
        <begin position="115"/>
        <end position="116"/>
    </location>
</feature>
<feature type="domain" description="v-SNARE coiled-coil homology" evidence="5">
    <location>
        <begin position="31"/>
        <end position="91"/>
    </location>
</feature>
<feature type="region of interest" description="Disordered" evidence="6">
    <location>
        <begin position="1"/>
        <end position="33"/>
    </location>
</feature>
<feature type="region of interest" description="Required for interaction with SEPT8" evidence="3">
    <location>
        <begin position="92"/>
        <end position="116"/>
    </location>
</feature>
<feature type="site" description="(Microbial infection) Cleavage; by C.botulinum neurotoxin type F (BoNT/F, botF)" evidence="19">
    <location>
        <begin position="58"/>
        <end position="59"/>
    </location>
</feature>
<feature type="site" description="(Microbial infection) Cleavage; by C.botulinum neurotoxin type D (BoNT/D, botD)" evidence="16">
    <location>
        <begin position="76"/>
        <end position="77"/>
    </location>
</feature>
<feature type="site" description="(Microbial infection) Cleavage; by C.tetani toxin (tetX)" evidence="16">
    <location>
        <begin position="76"/>
        <end position="77"/>
    </location>
</feature>
<feature type="modified residue" description="N-acetylserine" evidence="1">
    <location>
        <position position="2"/>
    </location>
</feature>
<feature type="sequence variant" id="VAR_083584" description="In NEDHAHM." evidence="15">
    <location>
        <position position="43"/>
    </location>
</feature>
<feature type="sequence variant" id="VAR_083585" description="In NEDHAHM." evidence="15">
    <location>
        <position position="45"/>
    </location>
</feature>
<feature type="sequence variant" id="VAR_083586" description="In NEDHAHM; impaired vesicle fusion; dbSNP:rs1598265387." evidence="15">
    <original>S</original>
    <variation>P</variation>
    <location>
        <position position="75"/>
    </location>
</feature>
<feature type="sequence variant" id="VAR_083587" description="In NEDHAHM; dbSNP:rs1598265384." evidence="15">
    <original>F</original>
    <variation>S</variation>
    <location>
        <position position="77"/>
    </location>
</feature>
<feature type="sequence variant" id="VAR_083588" description="In NEDHAHM; no effect on vesicle fusion; dbSNP:rs1598265382." evidence="15">
    <original>E</original>
    <variation>A</variation>
    <location>
        <position position="78"/>
    </location>
</feature>
<feature type="mutagenesis site" description="Significant loss of phosphorylation; when associated with A-61, A-75 and A-80." evidence="8">
    <original>S</original>
    <variation>A</variation>
    <location>
        <position position="28"/>
    </location>
</feature>
<feature type="mutagenesis site" description="70% reduction in cleavage by C.botulinum neurotoxin type F (BoNT/F, botF)." evidence="9">
    <original>E</original>
    <variation>A</variation>
    <location>
        <position position="41"/>
    </location>
</feature>
<feature type="mutagenesis site" description="65% reduction in cleavage by BoNT/F." evidence="9">
    <original>V</original>
    <variation>D</variation>
    <location>
        <position position="50"/>
    </location>
</feature>
<feature type="mutagenesis site" description="98% reduction in cleavage by BoNT/F." evidence="9">
    <original>VL</original>
    <variation>DD</variation>
    <location>
        <begin position="53"/>
        <end position="54"/>
    </location>
</feature>
<feature type="mutagenesis site" description="Wild-type cleavage by BoNT/F." evidence="9">
    <original>V</original>
    <variation>A</variation>
    <location>
        <position position="53"/>
    </location>
</feature>
<feature type="mutagenesis site" description="90% reduction in cleavage by BoNT/F." evidence="9">
    <original>V</original>
    <variation>D</variation>
    <location>
        <position position="53"/>
    </location>
</feature>
<feature type="mutagenesis site" description="Significant loss of phosphorylation; when associated with A-28, A-75 and A-80." evidence="8">
    <original>S</original>
    <variation>A</variation>
    <location>
        <position position="61"/>
    </location>
</feature>
<feature type="mutagenesis site" description="Significant loss of phosphorylation; when associated with A-28, A-61 and A-80." evidence="8">
    <original>S</original>
    <variation>A</variation>
    <location>
        <position position="75"/>
    </location>
</feature>
<feature type="mutagenesis site" description="Significant loss of phosphorylation; when associated with A-28, A-61 and A-75." evidence="8">
    <original>S</original>
    <variation>A</variation>
    <location>
        <position position="80"/>
    </location>
</feature>
<feature type="sequence conflict" description="In Ref. 1; AAA60604, 2; CAA12385 and 3; AAF15551." evidence="18" ref="1 2 3">
    <original>T</original>
    <variation>S</variation>
    <location>
        <position position="116"/>
    </location>
</feature>
<feature type="strand" evidence="24">
    <location>
        <begin position="34"/>
        <end position="36"/>
    </location>
</feature>
<feature type="turn" evidence="24">
    <location>
        <begin position="47"/>
        <end position="49"/>
    </location>
</feature>
<feature type="helix" evidence="24">
    <location>
        <begin position="50"/>
        <end position="53"/>
    </location>
</feature>
<proteinExistence type="evidence at protein level"/>
<protein>
    <recommendedName>
        <fullName evidence="18">Vesicle-associated membrane protein 2</fullName>
        <shortName>VAMP-2</shortName>
    </recommendedName>
    <alternativeName>
        <fullName>Synaptobrevin-2</fullName>
    </alternativeName>
</protein>
<dbReference type="EMBL" id="M36205">
    <property type="protein sequence ID" value="AAA60604.1"/>
    <property type="molecule type" value="Genomic_DNA"/>
</dbReference>
<dbReference type="EMBL" id="M36201">
    <property type="protein sequence ID" value="AAA60604.1"/>
    <property type="status" value="JOINED"/>
    <property type="molecule type" value="Genomic_DNA"/>
</dbReference>
<dbReference type="EMBL" id="M36202">
    <property type="protein sequence ID" value="AAA60604.1"/>
    <property type="status" value="JOINED"/>
    <property type="molecule type" value="Genomic_DNA"/>
</dbReference>
<dbReference type="EMBL" id="M36203">
    <property type="protein sequence ID" value="AAA60604.1"/>
    <property type="status" value="JOINED"/>
    <property type="molecule type" value="Genomic_DNA"/>
</dbReference>
<dbReference type="EMBL" id="M36204">
    <property type="protein sequence ID" value="AAA60604.1"/>
    <property type="status" value="JOINED"/>
    <property type="molecule type" value="Genomic_DNA"/>
</dbReference>
<dbReference type="EMBL" id="AJ225044">
    <property type="protein sequence ID" value="CAA12385.1"/>
    <property type="molecule type" value="mRNA"/>
</dbReference>
<dbReference type="EMBL" id="AF135372">
    <property type="protein sequence ID" value="AAF15551.1"/>
    <property type="molecule type" value="Genomic_DNA"/>
</dbReference>
<dbReference type="EMBL" id="AK289555">
    <property type="protein sequence ID" value="BAF82244.1"/>
    <property type="molecule type" value="mRNA"/>
</dbReference>
<dbReference type="EMBL" id="CH471108">
    <property type="protein sequence ID" value="EAW90087.1"/>
    <property type="molecule type" value="Genomic_DNA"/>
</dbReference>
<dbReference type="EMBL" id="BC002737">
    <property type="protein sequence ID" value="AAH02737.3"/>
    <property type="molecule type" value="mRNA"/>
</dbReference>
<dbReference type="EMBL" id="BC019608">
    <property type="protein sequence ID" value="AAH19608.1"/>
    <property type="molecule type" value="mRNA"/>
</dbReference>
<dbReference type="EMBL" id="BC033870">
    <property type="protein sequence ID" value="AAH33870.1"/>
    <property type="molecule type" value="mRNA"/>
</dbReference>
<dbReference type="CCDS" id="CCDS32561.1"/>
<dbReference type="PIR" id="B38315">
    <property type="entry name" value="B38315"/>
</dbReference>
<dbReference type="RefSeq" id="NP_055047.2">
    <property type="nucleotide sequence ID" value="NM_014232.3"/>
</dbReference>
<dbReference type="PDB" id="3FIE">
    <property type="method" value="X-ray"/>
    <property type="resolution" value="2.10 A"/>
    <property type="chains" value="C/D=25-57"/>
</dbReference>
<dbReference type="PDB" id="3FII">
    <property type="method" value="X-ray"/>
    <property type="resolution" value="2.17 A"/>
    <property type="chains" value="B=32-57"/>
</dbReference>
<dbReference type="PDB" id="3RK2">
    <property type="method" value="X-ray"/>
    <property type="resolution" value="2.20 A"/>
    <property type="chains" value="A/E=28-60"/>
</dbReference>
<dbReference type="PDB" id="3RK3">
    <property type="method" value="X-ray"/>
    <property type="resolution" value="3.50 A"/>
    <property type="chains" value="A=28-60"/>
</dbReference>
<dbReference type="PDB" id="3RL0">
    <property type="method" value="X-ray"/>
    <property type="resolution" value="3.80 A"/>
    <property type="chains" value="A/E/I/M/Q/U/Y/c=28-60"/>
</dbReference>
<dbReference type="PDB" id="7UDC">
    <property type="method" value="EM"/>
    <property type="resolution" value="3.70 A"/>
    <property type="chains" value="C=29-83"/>
</dbReference>
<dbReference type="PDB" id="9CKX">
    <property type="method" value="X-ray"/>
    <property type="resolution" value="1.98 A"/>
    <property type="chains" value="A/B=95-114"/>
</dbReference>
<dbReference type="PDBsum" id="3FIE"/>
<dbReference type="PDBsum" id="3FII"/>
<dbReference type="PDBsum" id="3RK2"/>
<dbReference type="PDBsum" id="3RK3"/>
<dbReference type="PDBsum" id="3RL0"/>
<dbReference type="PDBsum" id="7UDC"/>
<dbReference type="PDBsum" id="9CKX"/>
<dbReference type="BMRB" id="P63027"/>
<dbReference type="EMDB" id="EMD-26456"/>
<dbReference type="SMR" id="P63027"/>
<dbReference type="BioGRID" id="112711">
    <property type="interactions" value="190"/>
</dbReference>
<dbReference type="CORUM" id="P63027"/>
<dbReference type="DIP" id="DIP-39072N"/>
<dbReference type="FunCoup" id="P63027">
    <property type="interactions" value="1228"/>
</dbReference>
<dbReference type="IntAct" id="P63027">
    <property type="interactions" value="85"/>
</dbReference>
<dbReference type="MINT" id="P63027"/>
<dbReference type="STRING" id="9606.ENSP00000418572"/>
<dbReference type="ChEMBL" id="CHEMBL2364160"/>
<dbReference type="DrugBank" id="DB00042">
    <property type="generic name" value="Botulinum toxin type B"/>
</dbReference>
<dbReference type="TCDB" id="1.F.1.1.1">
    <property type="family name" value="the synaptosomal vesicle fusion pore (svf-pore) family"/>
</dbReference>
<dbReference type="GlyGen" id="P63027">
    <property type="glycosylation" value="1 site, 1 O-linked glycan (1 site)"/>
</dbReference>
<dbReference type="iPTMnet" id="P63027"/>
<dbReference type="MetOSite" id="P63027"/>
<dbReference type="PhosphoSitePlus" id="P63027"/>
<dbReference type="SwissPalm" id="P63027"/>
<dbReference type="BioMuta" id="VAMP2"/>
<dbReference type="DMDM" id="288558837"/>
<dbReference type="jPOST" id="P63027"/>
<dbReference type="MassIVE" id="P63027"/>
<dbReference type="PaxDb" id="9606-ENSP00000314214"/>
<dbReference type="PeptideAtlas" id="P63027"/>
<dbReference type="ProteomicsDB" id="57471"/>
<dbReference type="Pumba" id="P63027"/>
<dbReference type="TopDownProteomics" id="P63027"/>
<dbReference type="Antibodypedia" id="24568">
    <property type="antibodies" value="301 antibodies from 35 providers"/>
</dbReference>
<dbReference type="DNASU" id="6844"/>
<dbReference type="Ensembl" id="ENST00000316509.11">
    <property type="protein sequence ID" value="ENSP00000314214.6"/>
    <property type="gene ID" value="ENSG00000220205.10"/>
</dbReference>
<dbReference type="GeneID" id="6844"/>
<dbReference type="KEGG" id="hsa:6844"/>
<dbReference type="MANE-Select" id="ENST00000316509.11">
    <property type="protein sequence ID" value="ENSP00000314214.6"/>
    <property type="RefSeq nucleotide sequence ID" value="NM_014232.3"/>
    <property type="RefSeq protein sequence ID" value="NP_055047.2"/>
</dbReference>
<dbReference type="UCSC" id="uc010cnt.2">
    <property type="organism name" value="human"/>
</dbReference>
<dbReference type="AGR" id="HGNC:12643"/>
<dbReference type="CTD" id="6844"/>
<dbReference type="DisGeNET" id="6844"/>
<dbReference type="GeneCards" id="VAMP2"/>
<dbReference type="HGNC" id="HGNC:12643">
    <property type="gene designation" value="VAMP2"/>
</dbReference>
<dbReference type="HPA" id="ENSG00000220205">
    <property type="expression patterns" value="Tissue enhanced (brain)"/>
</dbReference>
<dbReference type="MalaCards" id="VAMP2"/>
<dbReference type="MIM" id="185881">
    <property type="type" value="gene"/>
</dbReference>
<dbReference type="MIM" id="618760">
    <property type="type" value="phenotype"/>
</dbReference>
<dbReference type="neXtProt" id="NX_P63027"/>
<dbReference type="OpenTargets" id="ENSG00000220205"/>
<dbReference type="PharmGKB" id="PA37267"/>
<dbReference type="VEuPathDB" id="HostDB:ENSG00000220205"/>
<dbReference type="eggNOG" id="KOG0860">
    <property type="taxonomic scope" value="Eukaryota"/>
</dbReference>
<dbReference type="GeneTree" id="ENSGT00940000158370"/>
<dbReference type="InParanoid" id="P63027"/>
<dbReference type="OMA" id="TEQFHRS"/>
<dbReference type="OrthoDB" id="10042941at2759"/>
<dbReference type="PAN-GO" id="P63027">
    <property type="GO annotations" value="6 GO annotations based on evolutionary models"/>
</dbReference>
<dbReference type="PhylomeDB" id="P63027"/>
<dbReference type="TreeFam" id="TF313666"/>
<dbReference type="PathwayCommons" id="P63027"/>
<dbReference type="Reactome" id="R-HSA-1445148">
    <property type="pathway name" value="Translocation of SLC2A4 (GLUT4) to the plasma membrane"/>
</dbReference>
<dbReference type="Reactome" id="R-HSA-181429">
    <property type="pathway name" value="Serotonin Neurotransmitter Release Cycle"/>
</dbReference>
<dbReference type="Reactome" id="R-HSA-181430">
    <property type="pathway name" value="Norepinephrine Neurotransmitter Release Cycle"/>
</dbReference>
<dbReference type="Reactome" id="R-HSA-199992">
    <property type="pathway name" value="trans-Golgi Network Vesicle Budding"/>
</dbReference>
<dbReference type="Reactome" id="R-HSA-210500">
    <property type="pathway name" value="Glutamate Neurotransmitter Release Cycle"/>
</dbReference>
<dbReference type="Reactome" id="R-HSA-212676">
    <property type="pathway name" value="Dopamine Neurotransmitter Release Cycle"/>
</dbReference>
<dbReference type="Reactome" id="R-HSA-264642">
    <property type="pathway name" value="Acetylcholine Neurotransmitter Release Cycle"/>
</dbReference>
<dbReference type="Reactome" id="R-HSA-264876">
    <property type="pathway name" value="Insulin processing"/>
</dbReference>
<dbReference type="Reactome" id="R-HSA-422356">
    <property type="pathway name" value="Regulation of insulin secretion"/>
</dbReference>
<dbReference type="Reactome" id="R-HSA-432720">
    <property type="pathway name" value="Lysosome Vesicle Biogenesis"/>
</dbReference>
<dbReference type="Reactome" id="R-HSA-432722">
    <property type="pathway name" value="Golgi Associated Vesicle Biogenesis"/>
</dbReference>
<dbReference type="Reactome" id="R-HSA-449836">
    <property type="pathway name" value="Other interleukin signaling"/>
</dbReference>
<dbReference type="Reactome" id="R-HSA-5250955">
    <property type="pathway name" value="Toxicity of botulinum toxin type D (botD)"/>
</dbReference>
<dbReference type="Reactome" id="R-HSA-5250958">
    <property type="pathway name" value="Toxicity of botulinum toxin type B (botB)"/>
</dbReference>
<dbReference type="Reactome" id="R-HSA-5250981">
    <property type="pathway name" value="Toxicity of botulinum toxin type F (botF)"/>
</dbReference>
<dbReference type="Reactome" id="R-HSA-5250982">
    <property type="pathway name" value="Toxicity of tetanus toxin (tetX)"/>
</dbReference>
<dbReference type="Reactome" id="R-HSA-5250989">
    <property type="pathway name" value="Toxicity of botulinum toxin type G (botG)"/>
</dbReference>
<dbReference type="Reactome" id="R-HSA-8856825">
    <property type="pathway name" value="Cargo recognition for clathrin-mediated endocytosis"/>
</dbReference>
<dbReference type="Reactome" id="R-HSA-8856828">
    <property type="pathway name" value="Clathrin-mediated endocytosis"/>
</dbReference>
<dbReference type="Reactome" id="R-HSA-888590">
    <property type="pathway name" value="GABA synthesis, release, reuptake and degradation"/>
</dbReference>
<dbReference type="Reactome" id="R-HSA-9609523">
    <property type="pathway name" value="Insertion of tail-anchored proteins into the endoplasmic reticulum membrane"/>
</dbReference>
<dbReference type="Reactome" id="R-HSA-9662360">
    <property type="pathway name" value="Sensory processing of sound by inner hair cells of the cochlea"/>
</dbReference>
<dbReference type="SignaLink" id="P63027"/>
<dbReference type="SIGNOR" id="P63027"/>
<dbReference type="BioGRID-ORCS" id="6844">
    <property type="hits" value="10 hits in 1148 CRISPR screens"/>
</dbReference>
<dbReference type="ChiTaRS" id="VAMP2">
    <property type="organism name" value="human"/>
</dbReference>
<dbReference type="EvolutionaryTrace" id="P63027"/>
<dbReference type="GeneWiki" id="VAMP2"/>
<dbReference type="GenomeRNAi" id="6844"/>
<dbReference type="Pharos" id="P63027">
    <property type="development level" value="Tbio"/>
</dbReference>
<dbReference type="PRO" id="PR:P63027"/>
<dbReference type="Proteomes" id="UP000005640">
    <property type="component" value="Chromosome 17"/>
</dbReference>
<dbReference type="RNAct" id="P63027">
    <property type="molecule type" value="protein"/>
</dbReference>
<dbReference type="Bgee" id="ENSG00000220205">
    <property type="expression patterns" value="Expressed in Brodmann (1909) area 10 and 200 other cell types or tissues"/>
</dbReference>
<dbReference type="ExpressionAtlas" id="P63027">
    <property type="expression patterns" value="baseline and differential"/>
</dbReference>
<dbReference type="GO" id="GO:0030669">
    <property type="term" value="C:clathrin-coated endocytic vesicle membrane"/>
    <property type="evidence" value="ECO:0000304"/>
    <property type="project" value="Reactome"/>
</dbReference>
<dbReference type="GO" id="GO:0030136">
    <property type="term" value="C:clathrin-coated vesicle"/>
    <property type="evidence" value="ECO:0000314"/>
    <property type="project" value="UniProtKB"/>
</dbReference>
<dbReference type="GO" id="GO:0061202">
    <property type="term" value="C:clathrin-sculpted gamma-aminobutyric acid transport vesicle membrane"/>
    <property type="evidence" value="ECO:0000304"/>
    <property type="project" value="Reactome"/>
</dbReference>
<dbReference type="GO" id="GO:0060203">
    <property type="term" value="C:clathrin-sculpted glutamate transport vesicle membrane"/>
    <property type="evidence" value="ECO:0000304"/>
    <property type="project" value="Reactome"/>
</dbReference>
<dbReference type="GO" id="GO:0070083">
    <property type="term" value="C:clathrin-sculpted monoamine transport vesicle membrane"/>
    <property type="evidence" value="ECO:0000304"/>
    <property type="project" value="Reactome"/>
</dbReference>
<dbReference type="GO" id="GO:0031410">
    <property type="term" value="C:cytoplasmic vesicle"/>
    <property type="evidence" value="ECO:0000250"/>
    <property type="project" value="ParkinsonsUK-UCL"/>
</dbReference>
<dbReference type="GO" id="GO:0005829">
    <property type="term" value="C:cytosol"/>
    <property type="evidence" value="ECO:0000304"/>
    <property type="project" value="Reactome"/>
</dbReference>
<dbReference type="GO" id="GO:0043231">
    <property type="term" value="C:intracellular membrane-bounded organelle"/>
    <property type="evidence" value="ECO:0000250"/>
    <property type="project" value="ParkinsonsUK-UCL"/>
</dbReference>
<dbReference type="GO" id="GO:0016020">
    <property type="term" value="C:membrane"/>
    <property type="evidence" value="ECO:0000314"/>
    <property type="project" value="UniProtKB"/>
</dbReference>
<dbReference type="GO" id="GO:0043005">
    <property type="term" value="C:neuron projection"/>
    <property type="evidence" value="ECO:0000250"/>
    <property type="project" value="ParkinsonsUK-UCL"/>
</dbReference>
<dbReference type="GO" id="GO:0044306">
    <property type="term" value="C:neuron projection terminus"/>
    <property type="evidence" value="ECO:0000250"/>
    <property type="project" value="ParkinsonsUK-UCL"/>
</dbReference>
<dbReference type="GO" id="GO:0048471">
    <property type="term" value="C:perinuclear region of cytoplasm"/>
    <property type="evidence" value="ECO:0000250"/>
    <property type="project" value="ParkinsonsUK-UCL"/>
</dbReference>
<dbReference type="GO" id="GO:0005886">
    <property type="term" value="C:plasma membrane"/>
    <property type="evidence" value="ECO:0000250"/>
    <property type="project" value="ParkinsonsUK-UCL"/>
</dbReference>
<dbReference type="GO" id="GO:0030141">
    <property type="term" value="C:secretory granule"/>
    <property type="evidence" value="ECO:0000250"/>
    <property type="project" value="ParkinsonsUK-UCL"/>
</dbReference>
<dbReference type="GO" id="GO:0030667">
    <property type="term" value="C:secretory granule membrane"/>
    <property type="evidence" value="ECO:0000304"/>
    <property type="project" value="Reactome"/>
</dbReference>
<dbReference type="GO" id="GO:0031201">
    <property type="term" value="C:SNARE complex"/>
    <property type="evidence" value="ECO:0000314"/>
    <property type="project" value="UniProtKB"/>
</dbReference>
<dbReference type="GO" id="GO:0045202">
    <property type="term" value="C:synapse"/>
    <property type="evidence" value="ECO:0000250"/>
    <property type="project" value="ParkinsonsUK-UCL"/>
</dbReference>
<dbReference type="GO" id="GO:0008021">
    <property type="term" value="C:synaptic vesicle"/>
    <property type="evidence" value="ECO:0000250"/>
    <property type="project" value="ParkinsonsUK-UCL"/>
</dbReference>
<dbReference type="GO" id="GO:0030672">
    <property type="term" value="C:synaptic vesicle membrane"/>
    <property type="evidence" value="ECO:0000250"/>
    <property type="project" value="ParkinsonsUK-UCL"/>
</dbReference>
<dbReference type="GO" id="GO:0070044">
    <property type="term" value="C:synaptobrevin 2-SNAP-25-syntaxin-1a complex"/>
    <property type="evidence" value="ECO:0000250"/>
    <property type="project" value="ParkinsonsUK-UCL"/>
</dbReference>
<dbReference type="GO" id="GO:0070032">
    <property type="term" value="C:synaptobrevin 2-SNAP-25-syntaxin-1a-complexin I complex"/>
    <property type="evidence" value="ECO:0000250"/>
    <property type="project" value="ParkinsonsUK-UCL"/>
</dbReference>
<dbReference type="GO" id="GO:0070033">
    <property type="term" value="C:synaptobrevin 2-SNAP-25-syntaxin-1a-complexin II complex"/>
    <property type="evidence" value="ECO:0000250"/>
    <property type="project" value="ParkinsonsUK-UCL"/>
</dbReference>
<dbReference type="GO" id="GO:0005802">
    <property type="term" value="C:trans-Golgi network"/>
    <property type="evidence" value="ECO:0000250"/>
    <property type="project" value="ParkinsonsUK-UCL"/>
</dbReference>
<dbReference type="GO" id="GO:0031982">
    <property type="term" value="C:vesicle"/>
    <property type="evidence" value="ECO:0000314"/>
    <property type="project" value="UniProtKB"/>
</dbReference>
<dbReference type="GO" id="GO:0042589">
    <property type="term" value="C:zymogen granule membrane"/>
    <property type="evidence" value="ECO:0000250"/>
    <property type="project" value="ParkinsonsUK-UCL"/>
</dbReference>
<dbReference type="GO" id="GO:0048306">
    <property type="term" value="F:calcium-dependent protein binding"/>
    <property type="evidence" value="ECO:0000250"/>
    <property type="project" value="ParkinsonsUK-UCL"/>
</dbReference>
<dbReference type="GO" id="GO:0005516">
    <property type="term" value="F:calmodulin binding"/>
    <property type="evidence" value="ECO:0000250"/>
    <property type="project" value="ParkinsonsUK-UCL"/>
</dbReference>
<dbReference type="GO" id="GO:0005543">
    <property type="term" value="F:phospholipid binding"/>
    <property type="evidence" value="ECO:0000250"/>
    <property type="project" value="ParkinsonsUK-UCL"/>
</dbReference>
<dbReference type="GO" id="GO:0005484">
    <property type="term" value="F:SNAP receptor activity"/>
    <property type="evidence" value="ECO:0000318"/>
    <property type="project" value="GO_Central"/>
</dbReference>
<dbReference type="GO" id="GO:0000149">
    <property type="term" value="F:SNARE binding"/>
    <property type="evidence" value="ECO:0000250"/>
    <property type="project" value="ParkinsonsUK-UCL"/>
</dbReference>
<dbReference type="GO" id="GO:0019905">
    <property type="term" value="F:syntaxin binding"/>
    <property type="evidence" value="ECO:0000353"/>
    <property type="project" value="UniProtKB"/>
</dbReference>
<dbReference type="GO" id="GO:0017075">
    <property type="term" value="F:syntaxin-1 binding"/>
    <property type="evidence" value="ECO:0000250"/>
    <property type="project" value="ParkinsonsUK-UCL"/>
</dbReference>
<dbReference type="GO" id="GO:0017156">
    <property type="term" value="P:calcium-ion regulated exocytosis"/>
    <property type="evidence" value="ECO:0000250"/>
    <property type="project" value="ParkinsonsUK-UCL"/>
</dbReference>
<dbReference type="GO" id="GO:0032869">
    <property type="term" value="P:cellular response to insulin stimulus"/>
    <property type="evidence" value="ECO:0000250"/>
    <property type="project" value="ParkinsonsUK-UCL"/>
</dbReference>
<dbReference type="GO" id="GO:0043308">
    <property type="term" value="P:eosinophil degranulation"/>
    <property type="evidence" value="ECO:0000315"/>
    <property type="project" value="UniProtKB"/>
</dbReference>
<dbReference type="GO" id="GO:0006887">
    <property type="term" value="P:exocytosis"/>
    <property type="evidence" value="ECO:0000304"/>
    <property type="project" value="ParkinsonsUK-UCL"/>
</dbReference>
<dbReference type="GO" id="GO:0043001">
    <property type="term" value="P:Golgi to plasma membrane protein transport"/>
    <property type="evidence" value="ECO:0000250"/>
    <property type="project" value="ParkinsonsUK-UCL"/>
</dbReference>
<dbReference type="GO" id="GO:0060291">
    <property type="term" value="P:long-term synaptic potentiation"/>
    <property type="evidence" value="ECO:0000250"/>
    <property type="project" value="ParkinsonsUK-UCL"/>
</dbReference>
<dbReference type="GO" id="GO:0061025">
    <property type="term" value="P:membrane fusion"/>
    <property type="evidence" value="ECO:0000250"/>
    <property type="project" value="ParkinsonsUK-UCL"/>
</dbReference>
<dbReference type="GO" id="GO:0090316">
    <property type="term" value="P:positive regulation of intracellular protein transport"/>
    <property type="evidence" value="ECO:0000250"/>
    <property type="project" value="ParkinsonsUK-UCL"/>
</dbReference>
<dbReference type="GO" id="GO:0015031">
    <property type="term" value="P:protein transport"/>
    <property type="evidence" value="ECO:0000315"/>
    <property type="project" value="ParkinsonsUK-UCL"/>
</dbReference>
<dbReference type="GO" id="GO:0065003">
    <property type="term" value="P:protein-containing complex assembly"/>
    <property type="evidence" value="ECO:0000250"/>
    <property type="project" value="ParkinsonsUK-UCL"/>
</dbReference>
<dbReference type="GO" id="GO:1902259">
    <property type="term" value="P:regulation of delayed rectifier potassium channel activity"/>
    <property type="evidence" value="ECO:0000250"/>
    <property type="project" value="UniProtKB"/>
</dbReference>
<dbReference type="GO" id="GO:0017157">
    <property type="term" value="P:regulation of exocytosis"/>
    <property type="evidence" value="ECO:0000250"/>
    <property type="project" value="ParkinsonsUK-UCL"/>
</dbReference>
<dbReference type="GO" id="GO:0060627">
    <property type="term" value="P:regulation of vesicle-mediated transport"/>
    <property type="evidence" value="ECO:0000250"/>
    <property type="project" value="ParkinsonsUK-UCL"/>
</dbReference>
<dbReference type="GO" id="GO:0009749">
    <property type="term" value="P:response to glucose"/>
    <property type="evidence" value="ECO:0000250"/>
    <property type="project" value="ParkinsonsUK-UCL"/>
</dbReference>
<dbReference type="GO" id="GO:0035493">
    <property type="term" value="P:SNARE complex assembly"/>
    <property type="evidence" value="ECO:0000318"/>
    <property type="project" value="GO_Central"/>
</dbReference>
<dbReference type="GO" id="GO:0048488">
    <property type="term" value="P:synaptic vesicle endocytosis"/>
    <property type="evidence" value="ECO:0000250"/>
    <property type="project" value="UniProtKB"/>
</dbReference>
<dbReference type="GO" id="GO:0016079">
    <property type="term" value="P:synaptic vesicle exocytosis"/>
    <property type="evidence" value="ECO:0000250"/>
    <property type="project" value="ParkinsonsUK-UCL"/>
</dbReference>
<dbReference type="GO" id="GO:0006906">
    <property type="term" value="P:vesicle fusion"/>
    <property type="evidence" value="ECO:0000315"/>
    <property type="project" value="UniProtKB"/>
</dbReference>
<dbReference type="GO" id="GO:0016192">
    <property type="term" value="P:vesicle-mediated transport"/>
    <property type="evidence" value="ECO:0000250"/>
    <property type="project" value="ParkinsonsUK-UCL"/>
</dbReference>
<dbReference type="CDD" id="cd15870">
    <property type="entry name" value="R-SNARE_VAMP2"/>
    <property type="match status" value="1"/>
</dbReference>
<dbReference type="FunFam" id="1.20.5.110:FF:000013">
    <property type="entry name" value="Vesicle-associated membrane protein 2"/>
    <property type="match status" value="1"/>
</dbReference>
<dbReference type="Gene3D" id="1.20.5.110">
    <property type="match status" value="1"/>
</dbReference>
<dbReference type="InterPro" id="IPR001388">
    <property type="entry name" value="Synaptobrevin-like"/>
</dbReference>
<dbReference type="InterPro" id="IPR016444">
    <property type="entry name" value="Synaptobrevin/VAMP"/>
</dbReference>
<dbReference type="InterPro" id="IPR042855">
    <property type="entry name" value="V_SNARE_CC"/>
</dbReference>
<dbReference type="PANTHER" id="PTHR45701">
    <property type="entry name" value="SYNAPTOBREVIN FAMILY MEMBER"/>
    <property type="match status" value="1"/>
</dbReference>
<dbReference type="Pfam" id="PF00957">
    <property type="entry name" value="Synaptobrevin"/>
    <property type="match status" value="1"/>
</dbReference>
<dbReference type="PIRSF" id="PIRSF005409">
    <property type="entry name" value="Synaptobrevin_euk"/>
    <property type="match status" value="1"/>
</dbReference>
<dbReference type="PRINTS" id="PR00219">
    <property type="entry name" value="SYNAPTOBREVN"/>
</dbReference>
<dbReference type="SUPFAM" id="SSF58038">
    <property type="entry name" value="SNARE fusion complex"/>
    <property type="match status" value="1"/>
</dbReference>
<dbReference type="PROSITE" id="PS00417">
    <property type="entry name" value="SYNAPTOBREVIN"/>
    <property type="match status" value="1"/>
</dbReference>
<dbReference type="PROSITE" id="PS50892">
    <property type="entry name" value="V_SNARE"/>
    <property type="match status" value="1"/>
</dbReference>